<name>FER6_MAIZE</name>
<organism>
    <name type="scientific">Zea mays</name>
    <name type="common">Maize</name>
    <dbReference type="NCBI Taxonomy" id="4577"/>
    <lineage>
        <taxon>Eukaryota</taxon>
        <taxon>Viridiplantae</taxon>
        <taxon>Streptophyta</taxon>
        <taxon>Embryophyta</taxon>
        <taxon>Tracheophyta</taxon>
        <taxon>Spermatophyta</taxon>
        <taxon>Magnoliopsida</taxon>
        <taxon>Liliopsida</taxon>
        <taxon>Poales</taxon>
        <taxon>Poaceae</taxon>
        <taxon>PACMAD clade</taxon>
        <taxon>Panicoideae</taxon>
        <taxon>Andropogonodae</taxon>
        <taxon>Andropogoneae</taxon>
        <taxon>Tripsacinae</taxon>
        <taxon>Zea</taxon>
    </lineage>
</organism>
<proteinExistence type="evidence at transcript level"/>
<dbReference type="EMBL" id="AB001386">
    <property type="protein sequence ID" value="BAA19250.1"/>
    <property type="molecule type" value="Genomic_DNA"/>
</dbReference>
<dbReference type="EMBL" id="AB001385">
    <property type="protein sequence ID" value="BAA19249.1"/>
    <property type="molecule type" value="mRNA"/>
</dbReference>
<dbReference type="PIR" id="T02880">
    <property type="entry name" value="T02880"/>
</dbReference>
<dbReference type="RefSeq" id="NP_001104837.1">
    <property type="nucleotide sequence ID" value="NM_001111367.1"/>
</dbReference>
<dbReference type="SMR" id="P94044"/>
<dbReference type="FunCoup" id="P94044">
    <property type="interactions" value="50"/>
</dbReference>
<dbReference type="STRING" id="4577.P94044"/>
<dbReference type="PaxDb" id="4577-GRMZM2G106190_P01"/>
<dbReference type="GeneID" id="541612"/>
<dbReference type="KEGG" id="zma:541612"/>
<dbReference type="eggNOG" id="ENOG502RZ87">
    <property type="taxonomic scope" value="Eukaryota"/>
</dbReference>
<dbReference type="InParanoid" id="P94044"/>
<dbReference type="Proteomes" id="UP000007305">
    <property type="component" value="Unplaced"/>
</dbReference>
<dbReference type="ExpressionAtlas" id="P94044">
    <property type="expression patterns" value="baseline and differential"/>
</dbReference>
<dbReference type="GO" id="GO:0009507">
    <property type="term" value="C:chloroplast"/>
    <property type="evidence" value="ECO:0007669"/>
    <property type="project" value="UniProtKB-SubCell"/>
</dbReference>
<dbReference type="GO" id="GO:0051537">
    <property type="term" value="F:2 iron, 2 sulfur cluster binding"/>
    <property type="evidence" value="ECO:0007669"/>
    <property type="project" value="UniProtKB-KW"/>
</dbReference>
<dbReference type="GO" id="GO:0009055">
    <property type="term" value="F:electron transfer activity"/>
    <property type="evidence" value="ECO:0007669"/>
    <property type="project" value="InterPro"/>
</dbReference>
<dbReference type="GO" id="GO:0046872">
    <property type="term" value="F:metal ion binding"/>
    <property type="evidence" value="ECO:0007669"/>
    <property type="project" value="UniProtKB-KW"/>
</dbReference>
<dbReference type="GO" id="GO:0022900">
    <property type="term" value="P:electron transport chain"/>
    <property type="evidence" value="ECO:0007669"/>
    <property type="project" value="InterPro"/>
</dbReference>
<dbReference type="CDD" id="cd00207">
    <property type="entry name" value="fer2"/>
    <property type="match status" value="1"/>
</dbReference>
<dbReference type="FunFam" id="3.10.20.30:FF:000014">
    <property type="entry name" value="Ferredoxin"/>
    <property type="match status" value="1"/>
</dbReference>
<dbReference type="Gene3D" id="3.10.20.30">
    <property type="match status" value="1"/>
</dbReference>
<dbReference type="InterPro" id="IPR036010">
    <property type="entry name" value="2Fe-2S_ferredoxin-like_sf"/>
</dbReference>
<dbReference type="InterPro" id="IPR001041">
    <property type="entry name" value="2Fe-2S_ferredoxin-type"/>
</dbReference>
<dbReference type="InterPro" id="IPR006058">
    <property type="entry name" value="2Fe2S_fd_BS"/>
</dbReference>
<dbReference type="InterPro" id="IPR012675">
    <property type="entry name" value="Beta-grasp_dom_sf"/>
</dbReference>
<dbReference type="InterPro" id="IPR010241">
    <property type="entry name" value="Fd_pln"/>
</dbReference>
<dbReference type="NCBIfam" id="TIGR02008">
    <property type="entry name" value="fdx_plant"/>
    <property type="match status" value="1"/>
</dbReference>
<dbReference type="PANTHER" id="PTHR43112">
    <property type="entry name" value="FERREDOXIN"/>
    <property type="match status" value="1"/>
</dbReference>
<dbReference type="PANTHER" id="PTHR43112:SF11">
    <property type="entry name" value="FERREDOXIN-6, CHLOROPLASTIC"/>
    <property type="match status" value="1"/>
</dbReference>
<dbReference type="Pfam" id="PF00111">
    <property type="entry name" value="Fer2"/>
    <property type="match status" value="1"/>
</dbReference>
<dbReference type="SUPFAM" id="SSF54292">
    <property type="entry name" value="2Fe-2S ferredoxin-like"/>
    <property type="match status" value="1"/>
</dbReference>
<dbReference type="PROSITE" id="PS00197">
    <property type="entry name" value="2FE2S_FER_1"/>
    <property type="match status" value="1"/>
</dbReference>
<dbReference type="PROSITE" id="PS51085">
    <property type="entry name" value="2FE2S_FER_2"/>
    <property type="match status" value="1"/>
</dbReference>
<sequence length="155" mass="16298">MSTATAPRLPAPRSGASYHYQTTAAPAANTLSFAGHARQAARASGPRLSSRFVASAAAVLHKVKLVGPDGTEHEFEAPDDTYILEAAETAGVELPFSCRAGSCSTCAGRMSAGEVDQSEGSFLDDGQMAEGYLLTCISYPKADCVIHTHKEEDLY</sequence>
<protein>
    <recommendedName>
        <fullName>Ferredoxin-6, chloroplastic</fullName>
    </recommendedName>
    <alternativeName>
        <fullName>Ferredoxin VI</fullName>
        <shortName>Fd VI</shortName>
    </alternativeName>
</protein>
<reference key="1">
    <citation type="journal article" date="1997" name="Plant Physiol.">
        <title>A nitrate-inducible ferredoxin in maize roots. Genomic organization and differential expression of two nonphotosynthetic ferredoxin isoproteins.</title>
        <authorList>
            <person name="Matsumura T."/>
            <person name="Sakakibara H."/>
            <person name="Nakano R."/>
            <person name="Kimata Y."/>
            <person name="Sugiyama T."/>
            <person name="Hase T."/>
        </authorList>
    </citation>
    <scope>NUCLEOTIDE SEQUENCE [GENOMIC DNA / MRNA]</scope>
</reference>
<keyword id="KW-0001">2Fe-2S</keyword>
<keyword id="KW-0150">Chloroplast</keyword>
<keyword id="KW-0249">Electron transport</keyword>
<keyword id="KW-0408">Iron</keyword>
<keyword id="KW-0411">Iron-sulfur</keyword>
<keyword id="KW-0479">Metal-binding</keyword>
<keyword id="KW-0934">Plastid</keyword>
<keyword id="KW-1185">Reference proteome</keyword>
<keyword id="KW-0809">Transit peptide</keyword>
<keyword id="KW-0813">Transport</keyword>
<feature type="transit peptide" description="Chloroplast" evidence="1">
    <location>
        <begin position="1"/>
        <end position="58"/>
    </location>
</feature>
<feature type="chain" id="PRO_0000008833" description="Ferredoxin-6, chloroplastic">
    <location>
        <begin position="59"/>
        <end position="155"/>
    </location>
</feature>
<feature type="domain" description="2Fe-2S ferredoxin-type" evidence="2">
    <location>
        <begin position="61"/>
        <end position="152"/>
    </location>
</feature>
<feature type="binding site" evidence="2">
    <location>
        <position position="98"/>
    </location>
    <ligand>
        <name>[2Fe-2S] cluster</name>
        <dbReference type="ChEBI" id="CHEBI:190135"/>
    </ligand>
</feature>
<feature type="binding site" evidence="2">
    <location>
        <position position="103"/>
    </location>
    <ligand>
        <name>[2Fe-2S] cluster</name>
        <dbReference type="ChEBI" id="CHEBI:190135"/>
    </ligand>
</feature>
<feature type="binding site" evidence="2">
    <location>
        <position position="106"/>
    </location>
    <ligand>
        <name>[2Fe-2S] cluster</name>
        <dbReference type="ChEBI" id="CHEBI:190135"/>
    </ligand>
</feature>
<feature type="binding site" evidence="2">
    <location>
        <position position="136"/>
    </location>
    <ligand>
        <name>[2Fe-2S] cluster</name>
        <dbReference type="ChEBI" id="CHEBI:190135"/>
    </ligand>
</feature>
<accession>P94044</accession>
<comment type="function">
    <text>Ferredoxins are iron-sulfur proteins that transfer electrons in a wide variety of metabolic reactions.</text>
</comment>
<comment type="cofactor">
    <cofactor>
        <name>[2Fe-2S] cluster</name>
        <dbReference type="ChEBI" id="CHEBI:190135"/>
    </cofactor>
    <text>Binds 1 [2Fe-2S] cluster.</text>
</comment>
<comment type="subcellular location">
    <subcellularLocation>
        <location>Plastid</location>
        <location>Chloroplast</location>
    </subcellularLocation>
</comment>
<comment type="induction">
    <text>By nitrate.</text>
</comment>
<comment type="similarity">
    <text evidence="3">Belongs to the 2Fe2S plant-type ferredoxin family.</text>
</comment>
<gene>
    <name type="primary">FDX6</name>
    <name type="synonym">PFD6</name>
</gene>
<evidence type="ECO:0000250" key="1"/>
<evidence type="ECO:0000255" key="2">
    <source>
        <dbReference type="PROSITE-ProRule" id="PRU00465"/>
    </source>
</evidence>
<evidence type="ECO:0000305" key="3"/>